<dbReference type="EC" id="3.1.3.48"/>
<dbReference type="EMBL" id="AY653733">
    <property type="protein sequence ID" value="AAV50883.1"/>
    <property type="molecule type" value="Genomic_DNA"/>
</dbReference>
<dbReference type="SMR" id="Q5UR74"/>
<dbReference type="KEGG" id="vg:9925263"/>
<dbReference type="OrthoDB" id="12612at10239"/>
<dbReference type="Proteomes" id="UP000001134">
    <property type="component" value="Genome"/>
</dbReference>
<dbReference type="GO" id="GO:0033550">
    <property type="term" value="F:MAP kinase tyrosine phosphatase activity"/>
    <property type="evidence" value="ECO:0007669"/>
    <property type="project" value="TreeGrafter"/>
</dbReference>
<dbReference type="GO" id="GO:0017017">
    <property type="term" value="F:MAP kinase tyrosine/serine/threonine phosphatase activity"/>
    <property type="evidence" value="ECO:0007669"/>
    <property type="project" value="TreeGrafter"/>
</dbReference>
<dbReference type="GO" id="GO:0008330">
    <property type="term" value="F:protein tyrosine/threonine phosphatase activity"/>
    <property type="evidence" value="ECO:0007669"/>
    <property type="project" value="TreeGrafter"/>
</dbReference>
<dbReference type="GO" id="GO:0043409">
    <property type="term" value="P:negative regulation of MAPK cascade"/>
    <property type="evidence" value="ECO:0007669"/>
    <property type="project" value="TreeGrafter"/>
</dbReference>
<dbReference type="CDD" id="cd14498">
    <property type="entry name" value="DSP"/>
    <property type="match status" value="1"/>
</dbReference>
<dbReference type="Gene3D" id="3.90.190.10">
    <property type="entry name" value="Protein tyrosine phosphatase superfamily"/>
    <property type="match status" value="1"/>
</dbReference>
<dbReference type="InterPro" id="IPR000340">
    <property type="entry name" value="Dual-sp_phosphatase_cat-dom"/>
</dbReference>
<dbReference type="InterPro" id="IPR029021">
    <property type="entry name" value="Prot-tyrosine_phosphatase-like"/>
</dbReference>
<dbReference type="InterPro" id="IPR000387">
    <property type="entry name" value="Tyr_Pase_dom"/>
</dbReference>
<dbReference type="InterPro" id="IPR020422">
    <property type="entry name" value="TYR_PHOSPHATASE_DUAL_dom"/>
</dbReference>
<dbReference type="PANTHER" id="PTHR10159">
    <property type="entry name" value="DUAL SPECIFICITY PROTEIN PHOSPHATASE"/>
    <property type="match status" value="1"/>
</dbReference>
<dbReference type="PANTHER" id="PTHR10159:SF519">
    <property type="entry name" value="DUAL SPECIFICITY PROTEIN PHOSPHATASE MPK3"/>
    <property type="match status" value="1"/>
</dbReference>
<dbReference type="Pfam" id="PF00782">
    <property type="entry name" value="DSPc"/>
    <property type="match status" value="1"/>
</dbReference>
<dbReference type="SMART" id="SM00195">
    <property type="entry name" value="DSPc"/>
    <property type="match status" value="1"/>
</dbReference>
<dbReference type="SUPFAM" id="SSF52799">
    <property type="entry name" value="(Phosphotyrosine protein) phosphatases II"/>
    <property type="match status" value="1"/>
</dbReference>
<dbReference type="PROSITE" id="PS50056">
    <property type="entry name" value="TYR_PHOSPHATASE_2"/>
    <property type="match status" value="1"/>
</dbReference>
<dbReference type="PROSITE" id="PS50054">
    <property type="entry name" value="TYR_PHOSPHATASE_DUAL"/>
    <property type="match status" value="1"/>
</dbReference>
<organism>
    <name type="scientific">Acanthamoeba polyphaga mimivirus</name>
    <name type="common">APMV</name>
    <dbReference type="NCBI Taxonomy" id="212035"/>
    <lineage>
        <taxon>Viruses</taxon>
        <taxon>Varidnaviria</taxon>
        <taxon>Bamfordvirae</taxon>
        <taxon>Nucleocytoviricota</taxon>
        <taxon>Megaviricetes</taxon>
        <taxon>Imitervirales</taxon>
        <taxon>Mimiviridae</taxon>
        <taxon>Megamimivirinae</taxon>
        <taxon>Mimivirus</taxon>
        <taxon>Mimivirus bradfordmassiliense</taxon>
    </lineage>
</organism>
<reference key="1">
    <citation type="journal article" date="2004" name="Science">
        <title>The 1.2-megabase genome sequence of Mimivirus.</title>
        <authorList>
            <person name="Raoult D."/>
            <person name="Audic S."/>
            <person name="Robert C."/>
            <person name="Abergel C."/>
            <person name="Renesto P."/>
            <person name="Ogata H."/>
            <person name="La Scola B."/>
            <person name="Susan M."/>
            <person name="Claverie J.-M."/>
        </authorList>
    </citation>
    <scope>NUCLEOTIDE SEQUENCE [LARGE SCALE GENOMIC DNA]</scope>
    <source>
        <strain>Rowbotham-Bradford</strain>
    </source>
</reference>
<feature type="chain" id="PRO_0000253995" description="Putative tyrosine-protein phosphatase R622">
    <location>
        <begin position="1"/>
        <end position="212"/>
    </location>
</feature>
<feature type="domain" description="Tyrosine-protein phosphatase" evidence="1">
    <location>
        <begin position="9"/>
        <end position="191"/>
    </location>
</feature>
<feature type="active site" description="Phosphocysteine intermediate" evidence="1">
    <location>
        <position position="135"/>
    </location>
</feature>
<proteinExistence type="inferred from homology"/>
<accession>Q5UR74</accession>
<name>PTPH_MIMIV</name>
<organismHost>
    <name type="scientific">Acanthamoeba polyphaga</name>
    <name type="common">Amoeba</name>
    <dbReference type="NCBI Taxonomy" id="5757"/>
</organismHost>
<comment type="catalytic activity">
    <reaction>
        <text>O-phospho-L-tyrosyl-[protein] + H2O = L-tyrosyl-[protein] + phosphate</text>
        <dbReference type="Rhea" id="RHEA:10684"/>
        <dbReference type="Rhea" id="RHEA-COMP:10136"/>
        <dbReference type="Rhea" id="RHEA-COMP:20101"/>
        <dbReference type="ChEBI" id="CHEBI:15377"/>
        <dbReference type="ChEBI" id="CHEBI:43474"/>
        <dbReference type="ChEBI" id="CHEBI:46858"/>
        <dbReference type="ChEBI" id="CHEBI:61978"/>
        <dbReference type="EC" id="3.1.3.48"/>
    </reaction>
</comment>
<comment type="similarity">
    <text evidence="2">Belongs to the protein-tyrosine phosphatase family. Non-receptor class dual specificity subfamily.</text>
</comment>
<evidence type="ECO:0000255" key="1">
    <source>
        <dbReference type="PROSITE-ProRule" id="PRU00160"/>
    </source>
</evidence>
<evidence type="ECO:0000305" key="2"/>
<keyword id="KW-0378">Hydrolase</keyword>
<keyword id="KW-0904">Protein phosphatase</keyword>
<keyword id="KW-1185">Reference proteome</keyword>
<gene>
    <name type="ordered locus">MIMI_R622</name>
</gene>
<protein>
    <recommendedName>
        <fullName>Putative tyrosine-protein phosphatase R622</fullName>
        <ecNumber>3.1.3.48</ecNumber>
    </recommendedName>
</protein>
<sequence length="212" mass="24840">MNFHPELSKISQVTNNIFLSGVFPMEQDPTVIKKLNIKYILACLDRQYVSDAHNAVLIDNPECTILYLPYDDDVSQNLWCKNKNTINLVKYTRTMEEYNCLYKQFQMYQNKPMIEIGYHFINNAVESGNNILIHCMAGISRSVSTLTYYLMKKYNIPYSQAIKYVKDRRSIVNPNDSFKLQLQGYQSKKENFIESDGKKVTDFFKYGQSRLK</sequence>